<evidence type="ECO:0000255" key="1">
    <source>
        <dbReference type="HAMAP-Rule" id="MF_00909"/>
    </source>
</evidence>
<evidence type="ECO:0000256" key="2">
    <source>
        <dbReference type="SAM" id="MobiDB-lite"/>
    </source>
</evidence>
<proteinExistence type="inferred from homology"/>
<dbReference type="EMBL" id="AE017198">
    <property type="protein sequence ID" value="AAS08796.1"/>
    <property type="molecule type" value="Genomic_DNA"/>
</dbReference>
<dbReference type="RefSeq" id="WP_011161844.1">
    <property type="nucleotide sequence ID" value="NC_005362.1"/>
</dbReference>
<dbReference type="SMR" id="Q74JY1"/>
<dbReference type="KEGG" id="ljo:LJ_0975"/>
<dbReference type="eggNOG" id="COG0206">
    <property type="taxonomic scope" value="Bacteria"/>
</dbReference>
<dbReference type="HOGENOM" id="CLU_024865_1_0_9"/>
<dbReference type="Proteomes" id="UP000000581">
    <property type="component" value="Chromosome"/>
</dbReference>
<dbReference type="GO" id="GO:0032153">
    <property type="term" value="C:cell division site"/>
    <property type="evidence" value="ECO:0007669"/>
    <property type="project" value="UniProtKB-UniRule"/>
</dbReference>
<dbReference type="GO" id="GO:0005737">
    <property type="term" value="C:cytoplasm"/>
    <property type="evidence" value="ECO:0007669"/>
    <property type="project" value="UniProtKB-SubCell"/>
</dbReference>
<dbReference type="GO" id="GO:0005525">
    <property type="term" value="F:GTP binding"/>
    <property type="evidence" value="ECO:0007669"/>
    <property type="project" value="UniProtKB-UniRule"/>
</dbReference>
<dbReference type="GO" id="GO:0003924">
    <property type="term" value="F:GTPase activity"/>
    <property type="evidence" value="ECO:0007669"/>
    <property type="project" value="UniProtKB-UniRule"/>
</dbReference>
<dbReference type="GO" id="GO:0000917">
    <property type="term" value="P:division septum assembly"/>
    <property type="evidence" value="ECO:0007669"/>
    <property type="project" value="UniProtKB-KW"/>
</dbReference>
<dbReference type="GO" id="GO:0043093">
    <property type="term" value="P:FtsZ-dependent cytokinesis"/>
    <property type="evidence" value="ECO:0007669"/>
    <property type="project" value="UniProtKB-UniRule"/>
</dbReference>
<dbReference type="GO" id="GO:0051258">
    <property type="term" value="P:protein polymerization"/>
    <property type="evidence" value="ECO:0007669"/>
    <property type="project" value="UniProtKB-UniRule"/>
</dbReference>
<dbReference type="CDD" id="cd02201">
    <property type="entry name" value="FtsZ_type1"/>
    <property type="match status" value="1"/>
</dbReference>
<dbReference type="FunFam" id="3.40.50.1440:FF:000023">
    <property type="entry name" value="Cell division protein FtsZ"/>
    <property type="match status" value="1"/>
</dbReference>
<dbReference type="Gene3D" id="3.30.1330.20">
    <property type="entry name" value="Tubulin/FtsZ, C-terminal domain"/>
    <property type="match status" value="1"/>
</dbReference>
<dbReference type="Gene3D" id="3.40.50.1440">
    <property type="entry name" value="Tubulin/FtsZ, GTPase domain"/>
    <property type="match status" value="1"/>
</dbReference>
<dbReference type="HAMAP" id="MF_00909">
    <property type="entry name" value="FtsZ"/>
    <property type="match status" value="1"/>
</dbReference>
<dbReference type="InterPro" id="IPR000158">
    <property type="entry name" value="Cell_div_FtsZ"/>
</dbReference>
<dbReference type="InterPro" id="IPR020805">
    <property type="entry name" value="Cell_div_FtsZ_CS"/>
</dbReference>
<dbReference type="InterPro" id="IPR045061">
    <property type="entry name" value="FtsZ/CetZ"/>
</dbReference>
<dbReference type="InterPro" id="IPR024757">
    <property type="entry name" value="FtsZ_C"/>
</dbReference>
<dbReference type="InterPro" id="IPR008280">
    <property type="entry name" value="Tub_FtsZ_C"/>
</dbReference>
<dbReference type="InterPro" id="IPR037103">
    <property type="entry name" value="Tubulin/FtsZ-like_C"/>
</dbReference>
<dbReference type="InterPro" id="IPR018316">
    <property type="entry name" value="Tubulin/FtsZ_2-layer-sand-dom"/>
</dbReference>
<dbReference type="InterPro" id="IPR036525">
    <property type="entry name" value="Tubulin/FtsZ_GTPase_sf"/>
</dbReference>
<dbReference type="InterPro" id="IPR003008">
    <property type="entry name" value="Tubulin_FtsZ_GTPase"/>
</dbReference>
<dbReference type="NCBIfam" id="TIGR00065">
    <property type="entry name" value="ftsZ"/>
    <property type="match status" value="1"/>
</dbReference>
<dbReference type="PANTHER" id="PTHR30314">
    <property type="entry name" value="CELL DIVISION PROTEIN FTSZ-RELATED"/>
    <property type="match status" value="1"/>
</dbReference>
<dbReference type="PANTHER" id="PTHR30314:SF3">
    <property type="entry name" value="MITOCHONDRIAL DIVISION PROTEIN FSZA"/>
    <property type="match status" value="1"/>
</dbReference>
<dbReference type="Pfam" id="PF12327">
    <property type="entry name" value="FtsZ_C"/>
    <property type="match status" value="1"/>
</dbReference>
<dbReference type="Pfam" id="PF00091">
    <property type="entry name" value="Tubulin"/>
    <property type="match status" value="1"/>
</dbReference>
<dbReference type="PRINTS" id="PR00423">
    <property type="entry name" value="CELLDVISFTSZ"/>
</dbReference>
<dbReference type="SMART" id="SM00864">
    <property type="entry name" value="Tubulin"/>
    <property type="match status" value="1"/>
</dbReference>
<dbReference type="SMART" id="SM00865">
    <property type="entry name" value="Tubulin_C"/>
    <property type="match status" value="1"/>
</dbReference>
<dbReference type="SUPFAM" id="SSF55307">
    <property type="entry name" value="Tubulin C-terminal domain-like"/>
    <property type="match status" value="1"/>
</dbReference>
<dbReference type="SUPFAM" id="SSF52490">
    <property type="entry name" value="Tubulin nucleotide-binding domain-like"/>
    <property type="match status" value="1"/>
</dbReference>
<dbReference type="PROSITE" id="PS01134">
    <property type="entry name" value="FTSZ_1"/>
    <property type="match status" value="1"/>
</dbReference>
<dbReference type="PROSITE" id="PS01135">
    <property type="entry name" value="FTSZ_2"/>
    <property type="match status" value="1"/>
</dbReference>
<comment type="function">
    <text evidence="1">Essential cell division protein that forms a contractile ring structure (Z ring) at the future cell division site. The regulation of the ring assembly controls the timing and the location of cell division. One of the functions of the FtsZ ring is to recruit other cell division proteins to the septum to produce a new cell wall between the dividing cells. Binds GTP and shows GTPase activity.</text>
</comment>
<comment type="subunit">
    <text evidence="1">Homodimer. Polymerizes to form a dynamic ring structure in a strictly GTP-dependent manner. Interacts directly with several other division proteins.</text>
</comment>
<comment type="subcellular location">
    <subcellularLocation>
        <location evidence="1">Cytoplasm</location>
    </subcellularLocation>
    <text evidence="1">Assembles at midcell at the inner surface of the cytoplasmic membrane.</text>
</comment>
<comment type="similarity">
    <text evidence="1">Belongs to the FtsZ family.</text>
</comment>
<reference key="1">
    <citation type="journal article" date="2004" name="Proc. Natl. Acad. Sci. U.S.A.">
        <title>The genome sequence of the probiotic intestinal bacterium Lactobacillus johnsonii NCC 533.</title>
        <authorList>
            <person name="Pridmore R.D."/>
            <person name="Berger B."/>
            <person name="Desiere F."/>
            <person name="Vilanova D."/>
            <person name="Barretto C."/>
            <person name="Pittet A.-C."/>
            <person name="Zwahlen M.-C."/>
            <person name="Rouvet M."/>
            <person name="Altermann E."/>
            <person name="Barrangou R."/>
            <person name="Mollet B."/>
            <person name="Mercenier A."/>
            <person name="Klaenhammer T."/>
            <person name="Arigoni F."/>
            <person name="Schell M.A."/>
        </authorList>
    </citation>
    <scope>NUCLEOTIDE SEQUENCE [LARGE SCALE GENOMIC DNA]</scope>
    <source>
        <strain>CNCM I-1225 / La1 / NCC 533</strain>
    </source>
</reference>
<organism>
    <name type="scientific">Lactobacillus johnsonii (strain CNCM I-12250 / La1 / NCC 533)</name>
    <dbReference type="NCBI Taxonomy" id="257314"/>
    <lineage>
        <taxon>Bacteria</taxon>
        <taxon>Bacillati</taxon>
        <taxon>Bacillota</taxon>
        <taxon>Bacilli</taxon>
        <taxon>Lactobacillales</taxon>
        <taxon>Lactobacillaceae</taxon>
        <taxon>Lactobacillus</taxon>
    </lineage>
</organism>
<sequence length="458" mass="48861">MDFTFDSDDNKNAVIKVIGVGGAGGNAVNRMIDEGVQGVSFIAANTDVQALNSNKAENKIQLGPKLTRGLGAGSHPEVGQKAAEESQQTIEDSLKGADMIFITAGMGGGTGTGAAPVIAKIARETGALTVGVVTRPFTFEGPKRSKNAAEGIAQLKQYVDTLVIIANNRLLEMVDKKTPMMDAFKEADNVLRQGVQGISDLITSTDYVNLDFADVKTVMENQGAALMGIGRASGENRTVEATKLAISSPLLEVSIDGAKQVLLNITGGPDLTLFEAQDASDIVSKAAGDGVNIIFGTSINANLGDEVVVTVIATGIDSKAEEEASKQPMRRPSRPARQEVVTPEPTKSEQPEVSKAASVDDTEVKVANTISHEAPTQSIPEVKAEKKESQDTLLDPTSVWKQDRKENNRPQPVENKEKDDDEFDSFSSDDSTSISQIETSVDDESDNDIPFFKHRRQD</sequence>
<feature type="chain" id="PRO_0000114358" description="Cell division protein FtsZ">
    <location>
        <begin position="1"/>
        <end position="458"/>
    </location>
</feature>
<feature type="region of interest" description="Disordered" evidence="2">
    <location>
        <begin position="319"/>
        <end position="458"/>
    </location>
</feature>
<feature type="compositionally biased region" description="Polar residues" evidence="2">
    <location>
        <begin position="368"/>
        <end position="379"/>
    </location>
</feature>
<feature type="compositionally biased region" description="Basic and acidic residues" evidence="2">
    <location>
        <begin position="401"/>
        <end position="418"/>
    </location>
</feature>
<feature type="compositionally biased region" description="Low complexity" evidence="2">
    <location>
        <begin position="425"/>
        <end position="439"/>
    </location>
</feature>
<feature type="binding site" evidence="1">
    <location>
        <begin position="22"/>
        <end position="26"/>
    </location>
    <ligand>
        <name>GTP</name>
        <dbReference type="ChEBI" id="CHEBI:37565"/>
    </ligand>
</feature>
<feature type="binding site" evidence="1">
    <location>
        <begin position="109"/>
        <end position="111"/>
    </location>
    <ligand>
        <name>GTP</name>
        <dbReference type="ChEBI" id="CHEBI:37565"/>
    </ligand>
</feature>
<feature type="binding site" evidence="1">
    <location>
        <position position="140"/>
    </location>
    <ligand>
        <name>GTP</name>
        <dbReference type="ChEBI" id="CHEBI:37565"/>
    </ligand>
</feature>
<feature type="binding site" evidence="1">
    <location>
        <position position="144"/>
    </location>
    <ligand>
        <name>GTP</name>
        <dbReference type="ChEBI" id="CHEBI:37565"/>
    </ligand>
</feature>
<feature type="binding site" evidence="1">
    <location>
        <position position="188"/>
    </location>
    <ligand>
        <name>GTP</name>
        <dbReference type="ChEBI" id="CHEBI:37565"/>
    </ligand>
</feature>
<name>FTSZ_LACJO</name>
<protein>
    <recommendedName>
        <fullName evidence="1">Cell division protein FtsZ</fullName>
    </recommendedName>
</protein>
<gene>
    <name evidence="1" type="primary">ftsZ</name>
    <name type="ordered locus">LJ_0975</name>
</gene>
<keyword id="KW-0131">Cell cycle</keyword>
<keyword id="KW-0132">Cell division</keyword>
<keyword id="KW-0963">Cytoplasm</keyword>
<keyword id="KW-0342">GTP-binding</keyword>
<keyword id="KW-0547">Nucleotide-binding</keyword>
<keyword id="KW-0717">Septation</keyword>
<accession>Q74JY1</accession>